<evidence type="ECO:0000255" key="1">
    <source>
        <dbReference type="HAMAP-Rule" id="MF_00691"/>
    </source>
</evidence>
<keyword id="KW-0067">ATP-binding</keyword>
<keyword id="KW-0378">Hydrolase</keyword>
<keyword id="KW-0547">Nucleotide-binding</keyword>
<keyword id="KW-1185">Reference proteome</keyword>
<feature type="chain" id="PRO_0000185010" description="5-oxoprolinase subunit A">
    <location>
        <begin position="1"/>
        <end position="257"/>
    </location>
</feature>
<proteinExistence type="inferred from homology"/>
<accession>Q6CYM1</accession>
<organism>
    <name type="scientific">Pectobacterium atrosepticum (strain SCRI 1043 / ATCC BAA-672)</name>
    <name type="common">Erwinia carotovora subsp. atroseptica</name>
    <dbReference type="NCBI Taxonomy" id="218491"/>
    <lineage>
        <taxon>Bacteria</taxon>
        <taxon>Pseudomonadati</taxon>
        <taxon>Pseudomonadota</taxon>
        <taxon>Gammaproteobacteria</taxon>
        <taxon>Enterobacterales</taxon>
        <taxon>Pectobacteriaceae</taxon>
        <taxon>Pectobacterium</taxon>
    </lineage>
</organism>
<dbReference type="EC" id="3.5.2.9" evidence="1"/>
<dbReference type="EMBL" id="BX950851">
    <property type="protein sequence ID" value="CAG77381.1"/>
    <property type="molecule type" value="Genomic_DNA"/>
</dbReference>
<dbReference type="RefSeq" id="WP_011095941.1">
    <property type="nucleotide sequence ID" value="NC_004547.2"/>
</dbReference>
<dbReference type="SMR" id="Q6CYM1"/>
<dbReference type="STRING" id="218491.ECA4486"/>
<dbReference type="KEGG" id="eca:ECA4486"/>
<dbReference type="PATRIC" id="fig|218491.5.peg.4573"/>
<dbReference type="eggNOG" id="COG1540">
    <property type="taxonomic scope" value="Bacteria"/>
</dbReference>
<dbReference type="HOGENOM" id="CLU_069535_0_0_6"/>
<dbReference type="OrthoDB" id="9773478at2"/>
<dbReference type="Proteomes" id="UP000007966">
    <property type="component" value="Chromosome"/>
</dbReference>
<dbReference type="GO" id="GO:0017168">
    <property type="term" value="F:5-oxoprolinase (ATP-hydrolyzing) activity"/>
    <property type="evidence" value="ECO:0007669"/>
    <property type="project" value="UniProtKB-UniRule"/>
</dbReference>
<dbReference type="GO" id="GO:0005524">
    <property type="term" value="F:ATP binding"/>
    <property type="evidence" value="ECO:0007669"/>
    <property type="project" value="UniProtKB-UniRule"/>
</dbReference>
<dbReference type="GO" id="GO:0005975">
    <property type="term" value="P:carbohydrate metabolic process"/>
    <property type="evidence" value="ECO:0007669"/>
    <property type="project" value="InterPro"/>
</dbReference>
<dbReference type="CDD" id="cd10787">
    <property type="entry name" value="LamB_YcsF_like"/>
    <property type="match status" value="1"/>
</dbReference>
<dbReference type="Gene3D" id="3.20.20.370">
    <property type="entry name" value="Glycoside hydrolase/deacetylase"/>
    <property type="match status" value="1"/>
</dbReference>
<dbReference type="HAMAP" id="MF_00691">
    <property type="entry name" value="PxpA"/>
    <property type="match status" value="1"/>
</dbReference>
<dbReference type="InterPro" id="IPR011330">
    <property type="entry name" value="Glyco_hydro/deAcase_b/a-brl"/>
</dbReference>
<dbReference type="InterPro" id="IPR005501">
    <property type="entry name" value="LamB/YcsF/PxpA-like"/>
</dbReference>
<dbReference type="NCBIfam" id="NF003814">
    <property type="entry name" value="PRK05406.1-3"/>
    <property type="match status" value="1"/>
</dbReference>
<dbReference type="NCBIfam" id="NF003816">
    <property type="entry name" value="PRK05406.1-5"/>
    <property type="match status" value="1"/>
</dbReference>
<dbReference type="PANTHER" id="PTHR30292:SF0">
    <property type="entry name" value="5-OXOPROLINASE SUBUNIT A"/>
    <property type="match status" value="1"/>
</dbReference>
<dbReference type="PANTHER" id="PTHR30292">
    <property type="entry name" value="UNCHARACTERIZED PROTEIN YBGL-RELATED"/>
    <property type="match status" value="1"/>
</dbReference>
<dbReference type="Pfam" id="PF03746">
    <property type="entry name" value="LamB_YcsF"/>
    <property type="match status" value="1"/>
</dbReference>
<dbReference type="SUPFAM" id="SSF88713">
    <property type="entry name" value="Glycoside hydrolase/deacetylase"/>
    <property type="match status" value="1"/>
</dbReference>
<gene>
    <name evidence="1" type="primary">pxpA</name>
    <name type="ordered locus">ECA4486</name>
</gene>
<comment type="function">
    <text evidence="1">Catalyzes the cleavage of 5-oxoproline to form L-glutamate coupled to the hydrolysis of ATP to ADP and inorganic phosphate.</text>
</comment>
<comment type="catalytic activity">
    <reaction evidence="1">
        <text>5-oxo-L-proline + ATP + 2 H2O = L-glutamate + ADP + phosphate + H(+)</text>
        <dbReference type="Rhea" id="RHEA:10348"/>
        <dbReference type="ChEBI" id="CHEBI:15377"/>
        <dbReference type="ChEBI" id="CHEBI:15378"/>
        <dbReference type="ChEBI" id="CHEBI:29985"/>
        <dbReference type="ChEBI" id="CHEBI:30616"/>
        <dbReference type="ChEBI" id="CHEBI:43474"/>
        <dbReference type="ChEBI" id="CHEBI:58402"/>
        <dbReference type="ChEBI" id="CHEBI:456216"/>
        <dbReference type="EC" id="3.5.2.9"/>
    </reaction>
</comment>
<comment type="subunit">
    <text evidence="1">Forms a complex composed of PxpA, PxpB and PxpC.</text>
</comment>
<comment type="similarity">
    <text evidence="1">Belongs to the LamB/PxpA family.</text>
</comment>
<name>PXPA_PECAS</name>
<protein>
    <recommendedName>
        <fullName evidence="1">5-oxoprolinase subunit A</fullName>
        <shortName evidence="1">5-OPase subunit A</shortName>
        <ecNumber evidence="1">3.5.2.9</ecNumber>
    </recommendedName>
    <alternativeName>
        <fullName evidence="1">5-oxoprolinase (ATP-hydrolyzing) subunit A</fullName>
    </alternativeName>
</protein>
<reference key="1">
    <citation type="journal article" date="2004" name="Proc. Natl. Acad. Sci. U.S.A.">
        <title>Genome sequence of the enterobacterial phytopathogen Erwinia carotovora subsp. atroseptica and characterization of virulence factors.</title>
        <authorList>
            <person name="Bell K.S."/>
            <person name="Sebaihia M."/>
            <person name="Pritchard L."/>
            <person name="Holden M.T.G."/>
            <person name="Hyman L.J."/>
            <person name="Holeva M.C."/>
            <person name="Thomson N.R."/>
            <person name="Bentley S.D."/>
            <person name="Churcher L.J.C."/>
            <person name="Mungall K."/>
            <person name="Atkin R."/>
            <person name="Bason N."/>
            <person name="Brooks K."/>
            <person name="Chillingworth T."/>
            <person name="Clark K."/>
            <person name="Doggett J."/>
            <person name="Fraser A."/>
            <person name="Hance Z."/>
            <person name="Hauser H."/>
            <person name="Jagels K."/>
            <person name="Moule S."/>
            <person name="Norbertczak H."/>
            <person name="Ormond D."/>
            <person name="Price C."/>
            <person name="Quail M.A."/>
            <person name="Sanders M."/>
            <person name="Walker D."/>
            <person name="Whitehead S."/>
            <person name="Salmond G.P.C."/>
            <person name="Birch P.R.J."/>
            <person name="Parkhill J."/>
            <person name="Toth I.K."/>
        </authorList>
    </citation>
    <scope>NUCLEOTIDE SEQUENCE [LARGE SCALE GENOMIC DNA]</scope>
    <source>
        <strain>SCRI 1043 / ATCC BAA-672</strain>
    </source>
</reference>
<sequence length="257" mass="27612">MKIDVNSDMGEGFGVWRVCDDDAMMRIVSSANIACGFHAGDPAIMTRMVRLAKAHGVGIGAHPGLPDKLGFGRKEMAFSADELCQLVVYQIGALCALAENEGMRVSHVSFHAAMGNMINRDDILALQVMQAIHRLDPEMIIFSQPDTIIERAAREAGLRSLTLFLADRAYDAQGHLVPRGTAGALISEETQVRDRVRQFLEQGTVKTIEGDMISVRAQSILVHSDTPGSVELAAIVRSEIEACGGTVTPAADVIAPS</sequence>